<name>RK14_MORIN</name>
<comment type="function">
    <text evidence="1">Binds to 23S rRNA.</text>
</comment>
<comment type="subunit">
    <text evidence="1">Part of the 50S ribosomal subunit.</text>
</comment>
<comment type="subcellular location">
    <subcellularLocation>
        <location>Plastid</location>
        <location>Chloroplast</location>
    </subcellularLocation>
</comment>
<comment type="similarity">
    <text evidence="1">Belongs to the universal ribosomal protein uL14 family.</text>
</comment>
<sequence>MIQPQTHLNVADNSGARKLMCIRIIGASNRRYAKIGDVVVAVIKEAIPNTPLERSEVIRAVIVRTCKELKRDNGMIIRYDDNAAVVIDQERNPKGTRIFGAIARELRQLNFTKIVSLAPEVL</sequence>
<organism>
    <name type="scientific">Morus indica</name>
    <name type="common">Mulberry</name>
    <dbReference type="NCBI Taxonomy" id="248361"/>
    <lineage>
        <taxon>Eukaryota</taxon>
        <taxon>Viridiplantae</taxon>
        <taxon>Streptophyta</taxon>
        <taxon>Embryophyta</taxon>
        <taxon>Tracheophyta</taxon>
        <taxon>Spermatophyta</taxon>
        <taxon>Magnoliopsida</taxon>
        <taxon>eudicotyledons</taxon>
        <taxon>Gunneridae</taxon>
        <taxon>Pentapetalae</taxon>
        <taxon>rosids</taxon>
        <taxon>fabids</taxon>
        <taxon>Rosales</taxon>
        <taxon>Moraceae</taxon>
        <taxon>Moreae</taxon>
        <taxon>Morus</taxon>
    </lineage>
</organism>
<accession>Q09WY1</accession>
<protein>
    <recommendedName>
        <fullName evidence="1">Large ribosomal subunit protein uL14c</fullName>
    </recommendedName>
    <alternativeName>
        <fullName evidence="2">50S ribosomal protein L14, chloroplastic</fullName>
    </alternativeName>
</protein>
<gene>
    <name evidence="1" type="primary">rpl14</name>
    <name type="ordered locus">MoinCp057</name>
</gene>
<reference key="1">
    <citation type="submission" date="2005-09" db="EMBL/GenBank/DDBJ databases">
        <title>The chloroplast genome of mulberry: structural features and comparative analysis.</title>
        <authorList>
            <person name="Ravi V."/>
            <person name="Khurana J.P."/>
            <person name="Tyagi A.K."/>
            <person name="Khurana P."/>
        </authorList>
    </citation>
    <scope>NUCLEOTIDE SEQUENCE [LARGE SCALE GENOMIC DNA]</scope>
    <source>
        <strain>cv. K2</strain>
    </source>
</reference>
<dbReference type="EMBL" id="DQ226511">
    <property type="protein sequence ID" value="ABB20993.1"/>
    <property type="molecule type" value="Genomic_DNA"/>
</dbReference>
<dbReference type="RefSeq" id="YP_762297.1">
    <property type="nucleotide sequence ID" value="NC_008359.1"/>
</dbReference>
<dbReference type="SMR" id="Q09WY1"/>
<dbReference type="GeneID" id="4290633"/>
<dbReference type="GO" id="GO:0009507">
    <property type="term" value="C:chloroplast"/>
    <property type="evidence" value="ECO:0007669"/>
    <property type="project" value="UniProtKB-SubCell"/>
</dbReference>
<dbReference type="GO" id="GO:0022625">
    <property type="term" value="C:cytosolic large ribosomal subunit"/>
    <property type="evidence" value="ECO:0007669"/>
    <property type="project" value="TreeGrafter"/>
</dbReference>
<dbReference type="GO" id="GO:0070180">
    <property type="term" value="F:large ribosomal subunit rRNA binding"/>
    <property type="evidence" value="ECO:0007669"/>
    <property type="project" value="TreeGrafter"/>
</dbReference>
<dbReference type="GO" id="GO:0003735">
    <property type="term" value="F:structural constituent of ribosome"/>
    <property type="evidence" value="ECO:0007669"/>
    <property type="project" value="InterPro"/>
</dbReference>
<dbReference type="GO" id="GO:0006412">
    <property type="term" value="P:translation"/>
    <property type="evidence" value="ECO:0007669"/>
    <property type="project" value="UniProtKB-UniRule"/>
</dbReference>
<dbReference type="CDD" id="cd00337">
    <property type="entry name" value="Ribosomal_uL14"/>
    <property type="match status" value="1"/>
</dbReference>
<dbReference type="FunFam" id="2.40.150.20:FF:000002">
    <property type="entry name" value="50S ribosomal protein L14, chloroplastic"/>
    <property type="match status" value="1"/>
</dbReference>
<dbReference type="Gene3D" id="2.40.150.20">
    <property type="entry name" value="Ribosomal protein L14"/>
    <property type="match status" value="1"/>
</dbReference>
<dbReference type="HAMAP" id="MF_01367">
    <property type="entry name" value="Ribosomal_uL14"/>
    <property type="match status" value="1"/>
</dbReference>
<dbReference type="InterPro" id="IPR000218">
    <property type="entry name" value="Ribosomal_uL14"/>
</dbReference>
<dbReference type="InterPro" id="IPR005745">
    <property type="entry name" value="Ribosomal_uL14_bac-type"/>
</dbReference>
<dbReference type="InterPro" id="IPR019972">
    <property type="entry name" value="Ribosomal_uL14_CS"/>
</dbReference>
<dbReference type="InterPro" id="IPR036853">
    <property type="entry name" value="Ribosomal_uL14_sf"/>
</dbReference>
<dbReference type="NCBIfam" id="TIGR01067">
    <property type="entry name" value="rplN_bact"/>
    <property type="match status" value="1"/>
</dbReference>
<dbReference type="PANTHER" id="PTHR11761">
    <property type="entry name" value="50S/60S RIBOSOMAL PROTEIN L14/L23"/>
    <property type="match status" value="1"/>
</dbReference>
<dbReference type="PANTHER" id="PTHR11761:SF3">
    <property type="entry name" value="LARGE RIBOSOMAL SUBUNIT PROTEIN UL14M"/>
    <property type="match status" value="1"/>
</dbReference>
<dbReference type="Pfam" id="PF00238">
    <property type="entry name" value="Ribosomal_L14"/>
    <property type="match status" value="1"/>
</dbReference>
<dbReference type="SMART" id="SM01374">
    <property type="entry name" value="Ribosomal_L14"/>
    <property type="match status" value="1"/>
</dbReference>
<dbReference type="SUPFAM" id="SSF50193">
    <property type="entry name" value="Ribosomal protein L14"/>
    <property type="match status" value="1"/>
</dbReference>
<dbReference type="PROSITE" id="PS00049">
    <property type="entry name" value="RIBOSOMAL_L14"/>
    <property type="match status" value="1"/>
</dbReference>
<proteinExistence type="inferred from homology"/>
<feature type="chain" id="PRO_0000276352" description="Large ribosomal subunit protein uL14c">
    <location>
        <begin position="1"/>
        <end position="122"/>
    </location>
</feature>
<geneLocation type="chloroplast"/>
<keyword id="KW-0150">Chloroplast</keyword>
<keyword id="KW-0934">Plastid</keyword>
<keyword id="KW-0687">Ribonucleoprotein</keyword>
<keyword id="KW-0689">Ribosomal protein</keyword>
<keyword id="KW-0694">RNA-binding</keyword>
<keyword id="KW-0699">rRNA-binding</keyword>
<evidence type="ECO:0000255" key="1">
    <source>
        <dbReference type="HAMAP-Rule" id="MF_01367"/>
    </source>
</evidence>
<evidence type="ECO:0000305" key="2"/>